<keyword id="KW-1185">Reference proteome</keyword>
<accession>O67112</accession>
<sequence length="165" mass="17617">MDIKVVKGSITEVDADVIVNPANSRGLMGGGVAVVIKRLGGEEIEREAVEKAPIPVGSAVLTTAGKLKFKGVIHAPTMEEPAMPSSEEKVRKATRAALELADKECFKIVAIPGMGTGVGGVPKEVAARAMVEEIRKFEPKCLEKVILVDIDEEMVEAWEKVLGLR</sequence>
<reference key="1">
    <citation type="journal article" date="1998" name="Nature">
        <title>The complete genome of the hyperthermophilic bacterium Aquifex aeolicus.</title>
        <authorList>
            <person name="Deckert G."/>
            <person name="Warren P.V."/>
            <person name="Gaasterland T."/>
            <person name="Young W.G."/>
            <person name="Lenox A.L."/>
            <person name="Graham D.E."/>
            <person name="Overbeek R."/>
            <person name="Snead M.A."/>
            <person name="Keller M."/>
            <person name="Aujay M."/>
            <person name="Huber R."/>
            <person name="Feldman R.A."/>
            <person name="Short J.M."/>
            <person name="Olsen G.J."/>
            <person name="Swanson R.V."/>
        </authorList>
    </citation>
    <scope>NUCLEOTIDE SEQUENCE [LARGE SCALE GENOMIC DNA]</scope>
    <source>
        <strain>VF5</strain>
    </source>
</reference>
<protein>
    <recommendedName>
        <fullName>Uncharacterized protein aq_987</fullName>
    </recommendedName>
</protein>
<feature type="chain" id="PRO_0000089188" description="Uncharacterized protein aq_987">
    <location>
        <begin position="1"/>
        <end position="165"/>
    </location>
</feature>
<feature type="domain" description="Macro" evidence="1">
    <location>
        <begin position="1"/>
        <end position="165"/>
    </location>
</feature>
<evidence type="ECO:0000255" key="1">
    <source>
        <dbReference type="PROSITE-ProRule" id="PRU00490"/>
    </source>
</evidence>
<name>Y987_AQUAE</name>
<organism>
    <name type="scientific">Aquifex aeolicus (strain VF5)</name>
    <dbReference type="NCBI Taxonomy" id="224324"/>
    <lineage>
        <taxon>Bacteria</taxon>
        <taxon>Pseudomonadati</taxon>
        <taxon>Aquificota</taxon>
        <taxon>Aquificia</taxon>
        <taxon>Aquificales</taxon>
        <taxon>Aquificaceae</taxon>
        <taxon>Aquifex</taxon>
    </lineage>
</organism>
<dbReference type="EMBL" id="AE000657">
    <property type="protein sequence ID" value="AAC07079.1"/>
    <property type="molecule type" value="Genomic_DNA"/>
</dbReference>
<dbReference type="PIR" id="E70385">
    <property type="entry name" value="E70385"/>
</dbReference>
<dbReference type="RefSeq" id="NP_213675.1">
    <property type="nucleotide sequence ID" value="NC_000918.1"/>
</dbReference>
<dbReference type="RefSeq" id="WP_010880613.1">
    <property type="nucleotide sequence ID" value="NC_000918.1"/>
</dbReference>
<dbReference type="SMR" id="O67112"/>
<dbReference type="FunCoup" id="O67112">
    <property type="interactions" value="210"/>
</dbReference>
<dbReference type="STRING" id="224324.aq_987"/>
<dbReference type="EnsemblBacteria" id="AAC07079">
    <property type="protein sequence ID" value="AAC07079"/>
    <property type="gene ID" value="aq_987"/>
</dbReference>
<dbReference type="KEGG" id="aae:aq_987"/>
<dbReference type="eggNOG" id="COG2110">
    <property type="taxonomic scope" value="Bacteria"/>
</dbReference>
<dbReference type="HOGENOM" id="CLU_046550_7_2_0"/>
<dbReference type="InParanoid" id="O67112"/>
<dbReference type="OrthoDB" id="6194521at2"/>
<dbReference type="Proteomes" id="UP000000798">
    <property type="component" value="Chromosome"/>
</dbReference>
<dbReference type="Gene3D" id="3.40.220.10">
    <property type="entry name" value="Leucine Aminopeptidase, subunit E, domain 1"/>
    <property type="match status" value="1"/>
</dbReference>
<dbReference type="InterPro" id="IPR002589">
    <property type="entry name" value="Macro_dom"/>
</dbReference>
<dbReference type="InterPro" id="IPR043472">
    <property type="entry name" value="Macro_dom-like"/>
</dbReference>
<dbReference type="NCBIfam" id="NF001666">
    <property type="entry name" value="PRK00431.2-2"/>
    <property type="match status" value="1"/>
</dbReference>
<dbReference type="PANTHER" id="PTHR11106">
    <property type="entry name" value="GANGLIOSIDE INDUCED DIFFERENTIATION ASSOCIATED PROTEIN 2-RELATED"/>
    <property type="match status" value="1"/>
</dbReference>
<dbReference type="PANTHER" id="PTHR11106:SF111">
    <property type="entry name" value="MACRO DOMAIN-CONTAINING PROTEIN"/>
    <property type="match status" value="1"/>
</dbReference>
<dbReference type="Pfam" id="PF01661">
    <property type="entry name" value="Macro"/>
    <property type="match status" value="1"/>
</dbReference>
<dbReference type="SMART" id="SM00506">
    <property type="entry name" value="A1pp"/>
    <property type="match status" value="1"/>
</dbReference>
<dbReference type="SUPFAM" id="SSF52949">
    <property type="entry name" value="Macro domain-like"/>
    <property type="match status" value="1"/>
</dbReference>
<dbReference type="PROSITE" id="PS51154">
    <property type="entry name" value="MACRO"/>
    <property type="match status" value="1"/>
</dbReference>
<gene>
    <name type="ordered locus">aq_987</name>
</gene>
<proteinExistence type="predicted"/>